<sequence length="428" mass="46988">MNAKVLEKKFIVPFVLITSLFALWGFANDITNPMVAVFQTVMEIPASEAALVQLAFYGGYGTMAIPAALFASRYSYKAGILLGLALYAIGAFLFWPAAQYEIFNFFLVSLYILTFGLAFLETTANPYILAMGDPQTATRRLNFAQSFNPLGSITGMFVASQLVLTNLESDKRDAAGNLIFHTLSEAEKMSIRTHDLAEIRDPYIALGFVVVAVFIIIGLKKMPAVKIEEAGQISFKTAVSRLAQKAKYREGVIAQAFYVGVQIMCWTFIVQYAERLGFTKAEGQNFNIIAMAIFISSRFISTALMKYLKAEFMLMLFAIGGFLSILGVIFIDGVWGLYCLILTSGFMPLMFPTIYGIALYGLKEESTLGAAGLVMAIVGGALMPPLQGMIIDQGEVMGLPAVNFSFILPLICFVVIAIYGFRAWKILK</sequence>
<accession>P44776</accession>
<protein>
    <recommendedName>
        <fullName evidence="1">L-fucose-proton symporter</fullName>
    </recommendedName>
    <alternativeName>
        <fullName evidence="1">L-fucose-H(+) symport protein</fullName>
    </alternativeName>
</protein>
<organism>
    <name type="scientific">Haemophilus influenzae (strain ATCC 51907 / DSM 11121 / KW20 / Rd)</name>
    <dbReference type="NCBI Taxonomy" id="71421"/>
    <lineage>
        <taxon>Bacteria</taxon>
        <taxon>Pseudomonadati</taxon>
        <taxon>Pseudomonadota</taxon>
        <taxon>Gammaproteobacteria</taxon>
        <taxon>Pasteurellales</taxon>
        <taxon>Pasteurellaceae</taxon>
        <taxon>Haemophilus</taxon>
    </lineage>
</organism>
<feature type="chain" id="PRO_0000094502" description="L-fucose-proton symporter">
    <location>
        <begin position="1"/>
        <end position="428"/>
    </location>
</feature>
<feature type="transmembrane region" description="Helical" evidence="2">
    <location>
        <begin position="10"/>
        <end position="30"/>
    </location>
</feature>
<feature type="transmembrane region" description="Helical" evidence="2">
    <location>
        <begin position="51"/>
        <end position="71"/>
    </location>
</feature>
<feature type="transmembrane region" description="Helical" evidence="2">
    <location>
        <begin position="78"/>
        <end position="98"/>
    </location>
</feature>
<feature type="transmembrane region" description="Helical" evidence="2">
    <location>
        <begin position="100"/>
        <end position="120"/>
    </location>
</feature>
<feature type="transmembrane region" description="Helical" evidence="2">
    <location>
        <begin position="147"/>
        <end position="167"/>
    </location>
</feature>
<feature type="transmembrane region" description="Helical" evidence="2">
    <location>
        <begin position="204"/>
        <end position="224"/>
    </location>
</feature>
<feature type="transmembrane region" description="Helical" evidence="2">
    <location>
        <begin position="250"/>
        <end position="270"/>
    </location>
</feature>
<feature type="transmembrane region" description="Helical" evidence="2">
    <location>
        <begin position="288"/>
        <end position="308"/>
    </location>
</feature>
<feature type="transmembrane region" description="Helical" evidence="2">
    <location>
        <begin position="311"/>
        <end position="331"/>
    </location>
</feature>
<feature type="transmembrane region" description="Helical" evidence="2">
    <location>
        <begin position="339"/>
        <end position="359"/>
    </location>
</feature>
<feature type="transmembrane region" description="Helical" evidence="2">
    <location>
        <begin position="371"/>
        <end position="391"/>
    </location>
</feature>
<feature type="transmembrane region" description="Helical" evidence="2">
    <location>
        <begin position="401"/>
        <end position="421"/>
    </location>
</feature>
<reference key="1">
    <citation type="journal article" date="1995" name="Science">
        <title>Whole-genome random sequencing and assembly of Haemophilus influenzae Rd.</title>
        <authorList>
            <person name="Fleischmann R.D."/>
            <person name="Adams M.D."/>
            <person name="White O."/>
            <person name="Clayton R.A."/>
            <person name="Kirkness E.F."/>
            <person name="Kerlavage A.R."/>
            <person name="Bult C.J."/>
            <person name="Tomb J.-F."/>
            <person name="Dougherty B.A."/>
            <person name="Merrick J.M."/>
            <person name="McKenney K."/>
            <person name="Sutton G.G."/>
            <person name="FitzHugh W."/>
            <person name="Fields C.A."/>
            <person name="Gocayne J.D."/>
            <person name="Scott J.D."/>
            <person name="Shirley R."/>
            <person name="Liu L.-I."/>
            <person name="Glodek A."/>
            <person name="Kelley J.M."/>
            <person name="Weidman J.F."/>
            <person name="Phillips C.A."/>
            <person name="Spriggs T."/>
            <person name="Hedblom E."/>
            <person name="Cotton M.D."/>
            <person name="Utterback T.R."/>
            <person name="Hanna M.C."/>
            <person name="Nguyen D.T."/>
            <person name="Saudek D.M."/>
            <person name="Brandon R.C."/>
            <person name="Fine L.D."/>
            <person name="Fritchman J.L."/>
            <person name="Fuhrmann J.L."/>
            <person name="Geoghagen N.S.M."/>
            <person name="Gnehm C.L."/>
            <person name="McDonald L.A."/>
            <person name="Small K.V."/>
            <person name="Fraser C.M."/>
            <person name="Smith H.O."/>
            <person name="Venter J.C."/>
        </authorList>
    </citation>
    <scope>NUCLEOTIDE SEQUENCE [LARGE SCALE GENOMIC DNA]</scope>
    <source>
        <strain>ATCC 51907 / DSM 11121 / KW20 / Rd</strain>
    </source>
</reference>
<proteinExistence type="inferred from homology"/>
<keyword id="KW-0119">Carbohydrate metabolism</keyword>
<keyword id="KW-0997">Cell inner membrane</keyword>
<keyword id="KW-1003">Cell membrane</keyword>
<keyword id="KW-0294">Fucose metabolism</keyword>
<keyword id="KW-0472">Membrane</keyword>
<keyword id="KW-1185">Reference proteome</keyword>
<keyword id="KW-0762">Sugar transport</keyword>
<keyword id="KW-0812">Transmembrane</keyword>
<keyword id="KW-1133">Transmembrane helix</keyword>
<keyword id="KW-0813">Transport</keyword>
<comment type="function">
    <text evidence="1">Mediates the uptake of L-fucose across the boundary membrane with the concomitant transport of protons into the cell (symport system).</text>
</comment>
<comment type="catalytic activity">
    <reaction evidence="1">
        <text>L-fucose(in) + H(+)(in) = L-fucose(out) + H(+)(out)</text>
        <dbReference type="Rhea" id="RHEA:29023"/>
        <dbReference type="ChEBI" id="CHEBI:2181"/>
        <dbReference type="ChEBI" id="CHEBI:15378"/>
    </reaction>
    <physiologicalReaction direction="right-to-left" evidence="1">
        <dbReference type="Rhea" id="RHEA:29025"/>
    </physiologicalReaction>
</comment>
<comment type="subcellular location">
    <subcellularLocation>
        <location evidence="1">Cell inner membrane</location>
        <topology evidence="1">Multi-pass membrane protein</topology>
    </subcellularLocation>
</comment>
<comment type="similarity">
    <text evidence="3">Belongs to the major facilitator superfamily. FHS transporter (TC 2.A.1.7) family.</text>
</comment>
<evidence type="ECO:0000250" key="1">
    <source>
        <dbReference type="UniProtKB" id="P11551"/>
    </source>
</evidence>
<evidence type="ECO:0000255" key="2"/>
<evidence type="ECO:0000305" key="3"/>
<dbReference type="EMBL" id="L42023">
    <property type="protein sequence ID" value="AAC22269.1"/>
    <property type="molecule type" value="Genomic_DNA"/>
</dbReference>
<dbReference type="PIR" id="B64081">
    <property type="entry name" value="B64081"/>
</dbReference>
<dbReference type="RefSeq" id="NP_438768.1">
    <property type="nucleotide sequence ID" value="NC_000907.1"/>
</dbReference>
<dbReference type="SMR" id="P44776"/>
<dbReference type="STRING" id="71421.HI_0610"/>
<dbReference type="EnsemblBacteria" id="AAC22269">
    <property type="protein sequence ID" value="AAC22269"/>
    <property type="gene ID" value="HI_0610"/>
</dbReference>
<dbReference type="KEGG" id="hin:HI_0610"/>
<dbReference type="PATRIC" id="fig|71421.8.peg.634"/>
<dbReference type="eggNOG" id="COG0738">
    <property type="taxonomic scope" value="Bacteria"/>
</dbReference>
<dbReference type="HOGENOM" id="CLU_028452_0_1_6"/>
<dbReference type="OrthoDB" id="9795150at2"/>
<dbReference type="PhylomeDB" id="P44776"/>
<dbReference type="BioCyc" id="HINF71421:G1GJ1-631-MONOMER"/>
<dbReference type="Proteomes" id="UP000000579">
    <property type="component" value="Chromosome"/>
</dbReference>
<dbReference type="GO" id="GO:0005886">
    <property type="term" value="C:plasma membrane"/>
    <property type="evidence" value="ECO:0007669"/>
    <property type="project" value="UniProtKB-SubCell"/>
</dbReference>
<dbReference type="GO" id="GO:0015535">
    <property type="term" value="F:fucose:proton symporter activity"/>
    <property type="evidence" value="ECO:0007669"/>
    <property type="project" value="InterPro"/>
</dbReference>
<dbReference type="GO" id="GO:0006004">
    <property type="term" value="P:fucose metabolic process"/>
    <property type="evidence" value="ECO:0007669"/>
    <property type="project" value="UniProtKB-KW"/>
</dbReference>
<dbReference type="CDD" id="cd17394">
    <property type="entry name" value="MFS_FucP_like"/>
    <property type="match status" value="1"/>
</dbReference>
<dbReference type="Gene3D" id="1.20.1250.20">
    <property type="entry name" value="MFS general substrate transporter like domains"/>
    <property type="match status" value="2"/>
</dbReference>
<dbReference type="InterPro" id="IPR005275">
    <property type="entry name" value="Lfuc_symporter_FucP"/>
</dbReference>
<dbReference type="InterPro" id="IPR011701">
    <property type="entry name" value="MFS"/>
</dbReference>
<dbReference type="InterPro" id="IPR036259">
    <property type="entry name" value="MFS_trans_sf"/>
</dbReference>
<dbReference type="InterPro" id="IPR050375">
    <property type="entry name" value="MFS_TsgA-like"/>
</dbReference>
<dbReference type="NCBIfam" id="TIGR00885">
    <property type="entry name" value="fucP"/>
    <property type="match status" value="1"/>
</dbReference>
<dbReference type="PANTHER" id="PTHR43702">
    <property type="entry name" value="L-FUCOSE-PROTON SYMPORTER"/>
    <property type="match status" value="1"/>
</dbReference>
<dbReference type="PANTHER" id="PTHR43702:SF11">
    <property type="entry name" value="L-FUCOSE-PROTON SYMPORTER"/>
    <property type="match status" value="1"/>
</dbReference>
<dbReference type="Pfam" id="PF07690">
    <property type="entry name" value="MFS_1"/>
    <property type="match status" value="1"/>
</dbReference>
<dbReference type="SUPFAM" id="SSF103473">
    <property type="entry name" value="MFS general substrate transporter"/>
    <property type="match status" value="1"/>
</dbReference>
<name>FUCP_HAEIN</name>
<gene>
    <name type="primary">fucP</name>
    <name type="ordered locus">HI_0610</name>
</gene>